<reference key="1">
    <citation type="journal article" date="1999" name="Mol. Cell. Biol.">
        <title>Cloning and characterization of two evolutionarily conserved subunits (TFIIIC102 and TFIIIC63) of human TFIIIC and their involvement in functional interactions with TFIIIB and RNA polymerase III.</title>
        <authorList>
            <person name="Hsieh Y.-J."/>
            <person name="Wang Z."/>
            <person name="Kovelman R."/>
            <person name="Roeder R.G."/>
        </authorList>
    </citation>
    <scope>NUCLEOTIDE SEQUENCE [MRNA] (ISOFORM 1)</scope>
    <scope>INTERACTION WITH BRF1 AND TBP</scope>
    <scope>IDENTIFICATION OF SUBUNITS OF TFIIIC2 COMPLEX</scope>
</reference>
<reference key="2">
    <citation type="submission" date="2000-07" db="EMBL/GenBank/DDBJ databases">
        <title>Pediatric leukemia cDNA sequencing project.</title>
        <authorList>
            <person name="Zhou J."/>
            <person name="Yu W."/>
            <person name="Tang H."/>
            <person name="Mei G."/>
            <person name="Tsang Y.T.M."/>
            <person name="Bouck J."/>
            <person name="Gibbs R.A."/>
            <person name="Margolin J.F."/>
        </authorList>
    </citation>
    <scope>NUCLEOTIDE SEQUENCE [LARGE SCALE MRNA] (ISOFORM 1)</scope>
    <source>
        <tissue>Leukemia</tissue>
    </source>
</reference>
<reference key="3">
    <citation type="journal article" date="2004" name="Nat. Genet.">
        <title>Complete sequencing and characterization of 21,243 full-length human cDNAs.</title>
        <authorList>
            <person name="Ota T."/>
            <person name="Suzuki Y."/>
            <person name="Nishikawa T."/>
            <person name="Otsuki T."/>
            <person name="Sugiyama T."/>
            <person name="Irie R."/>
            <person name="Wakamatsu A."/>
            <person name="Hayashi K."/>
            <person name="Sato H."/>
            <person name="Nagai K."/>
            <person name="Kimura K."/>
            <person name="Makita H."/>
            <person name="Sekine M."/>
            <person name="Obayashi M."/>
            <person name="Nishi T."/>
            <person name="Shibahara T."/>
            <person name="Tanaka T."/>
            <person name="Ishii S."/>
            <person name="Yamamoto J."/>
            <person name="Saito K."/>
            <person name="Kawai Y."/>
            <person name="Isono Y."/>
            <person name="Nakamura Y."/>
            <person name="Nagahari K."/>
            <person name="Murakami K."/>
            <person name="Yasuda T."/>
            <person name="Iwayanagi T."/>
            <person name="Wagatsuma M."/>
            <person name="Shiratori A."/>
            <person name="Sudo H."/>
            <person name="Hosoiri T."/>
            <person name="Kaku Y."/>
            <person name="Kodaira H."/>
            <person name="Kondo H."/>
            <person name="Sugawara M."/>
            <person name="Takahashi M."/>
            <person name="Kanda K."/>
            <person name="Yokoi T."/>
            <person name="Furuya T."/>
            <person name="Kikkawa E."/>
            <person name="Omura Y."/>
            <person name="Abe K."/>
            <person name="Kamihara K."/>
            <person name="Katsuta N."/>
            <person name="Sato K."/>
            <person name="Tanikawa M."/>
            <person name="Yamazaki M."/>
            <person name="Ninomiya K."/>
            <person name="Ishibashi T."/>
            <person name="Yamashita H."/>
            <person name="Murakawa K."/>
            <person name="Fujimori K."/>
            <person name="Tanai H."/>
            <person name="Kimata M."/>
            <person name="Watanabe M."/>
            <person name="Hiraoka S."/>
            <person name="Chiba Y."/>
            <person name="Ishida S."/>
            <person name="Ono Y."/>
            <person name="Takiguchi S."/>
            <person name="Watanabe S."/>
            <person name="Yosida M."/>
            <person name="Hotuta T."/>
            <person name="Kusano J."/>
            <person name="Kanehori K."/>
            <person name="Takahashi-Fujii A."/>
            <person name="Hara H."/>
            <person name="Tanase T.-O."/>
            <person name="Nomura Y."/>
            <person name="Togiya S."/>
            <person name="Komai F."/>
            <person name="Hara R."/>
            <person name="Takeuchi K."/>
            <person name="Arita M."/>
            <person name="Imose N."/>
            <person name="Musashino K."/>
            <person name="Yuuki H."/>
            <person name="Oshima A."/>
            <person name="Sasaki N."/>
            <person name="Aotsuka S."/>
            <person name="Yoshikawa Y."/>
            <person name="Matsunawa H."/>
            <person name="Ichihara T."/>
            <person name="Shiohata N."/>
            <person name="Sano S."/>
            <person name="Moriya S."/>
            <person name="Momiyama H."/>
            <person name="Satoh N."/>
            <person name="Takami S."/>
            <person name="Terashima Y."/>
            <person name="Suzuki O."/>
            <person name="Nakagawa S."/>
            <person name="Senoh A."/>
            <person name="Mizoguchi H."/>
            <person name="Goto Y."/>
            <person name="Shimizu F."/>
            <person name="Wakebe H."/>
            <person name="Hishigaki H."/>
            <person name="Watanabe T."/>
            <person name="Sugiyama A."/>
            <person name="Takemoto M."/>
            <person name="Kawakami B."/>
            <person name="Yamazaki M."/>
            <person name="Watanabe K."/>
            <person name="Kumagai A."/>
            <person name="Itakura S."/>
            <person name="Fukuzumi Y."/>
            <person name="Fujimori Y."/>
            <person name="Komiyama M."/>
            <person name="Tashiro H."/>
            <person name="Tanigami A."/>
            <person name="Fujiwara T."/>
            <person name="Ono T."/>
            <person name="Yamada K."/>
            <person name="Fujii Y."/>
            <person name="Ozaki K."/>
            <person name="Hirao M."/>
            <person name="Ohmori Y."/>
            <person name="Kawabata A."/>
            <person name="Hikiji T."/>
            <person name="Kobatake N."/>
            <person name="Inagaki H."/>
            <person name="Ikema Y."/>
            <person name="Okamoto S."/>
            <person name="Okitani R."/>
            <person name="Kawakami T."/>
            <person name="Noguchi S."/>
            <person name="Itoh T."/>
            <person name="Shigeta K."/>
            <person name="Senba T."/>
            <person name="Matsumura K."/>
            <person name="Nakajima Y."/>
            <person name="Mizuno T."/>
            <person name="Morinaga M."/>
            <person name="Sasaki M."/>
            <person name="Togashi T."/>
            <person name="Oyama M."/>
            <person name="Hata H."/>
            <person name="Watanabe M."/>
            <person name="Komatsu T."/>
            <person name="Mizushima-Sugano J."/>
            <person name="Satoh T."/>
            <person name="Shirai Y."/>
            <person name="Takahashi Y."/>
            <person name="Nakagawa K."/>
            <person name="Okumura K."/>
            <person name="Nagase T."/>
            <person name="Nomura N."/>
            <person name="Kikuchi H."/>
            <person name="Masuho Y."/>
            <person name="Yamashita R."/>
            <person name="Nakai K."/>
            <person name="Yada T."/>
            <person name="Nakamura Y."/>
            <person name="Ohara O."/>
            <person name="Isogai T."/>
            <person name="Sugano S."/>
        </authorList>
    </citation>
    <scope>NUCLEOTIDE SEQUENCE [LARGE SCALE MRNA] (ISOFORM 2)</scope>
    <source>
        <tissue>Brain</tissue>
        <tissue>Spleen</tissue>
    </source>
</reference>
<reference key="4">
    <citation type="journal article" date="2004" name="Nature">
        <title>DNA sequence and analysis of human chromosome 9.</title>
        <authorList>
            <person name="Humphray S.J."/>
            <person name="Oliver K."/>
            <person name="Hunt A.R."/>
            <person name="Plumb R.W."/>
            <person name="Loveland J.E."/>
            <person name="Howe K.L."/>
            <person name="Andrews T.D."/>
            <person name="Searle S."/>
            <person name="Hunt S.E."/>
            <person name="Scott C.E."/>
            <person name="Jones M.C."/>
            <person name="Ainscough R."/>
            <person name="Almeida J.P."/>
            <person name="Ambrose K.D."/>
            <person name="Ashwell R.I.S."/>
            <person name="Babbage A.K."/>
            <person name="Babbage S."/>
            <person name="Bagguley C.L."/>
            <person name="Bailey J."/>
            <person name="Banerjee R."/>
            <person name="Barker D.J."/>
            <person name="Barlow K.F."/>
            <person name="Bates K."/>
            <person name="Beasley H."/>
            <person name="Beasley O."/>
            <person name="Bird C.P."/>
            <person name="Bray-Allen S."/>
            <person name="Brown A.J."/>
            <person name="Brown J.Y."/>
            <person name="Burford D."/>
            <person name="Burrill W."/>
            <person name="Burton J."/>
            <person name="Carder C."/>
            <person name="Carter N.P."/>
            <person name="Chapman J.C."/>
            <person name="Chen Y."/>
            <person name="Clarke G."/>
            <person name="Clark S.Y."/>
            <person name="Clee C.M."/>
            <person name="Clegg S."/>
            <person name="Collier R.E."/>
            <person name="Corby N."/>
            <person name="Crosier M."/>
            <person name="Cummings A.T."/>
            <person name="Davies J."/>
            <person name="Dhami P."/>
            <person name="Dunn M."/>
            <person name="Dutta I."/>
            <person name="Dyer L.W."/>
            <person name="Earthrowl M.E."/>
            <person name="Faulkner L."/>
            <person name="Fleming C.J."/>
            <person name="Frankish A."/>
            <person name="Frankland J.A."/>
            <person name="French L."/>
            <person name="Fricker D.G."/>
            <person name="Garner P."/>
            <person name="Garnett J."/>
            <person name="Ghori J."/>
            <person name="Gilbert J.G.R."/>
            <person name="Glison C."/>
            <person name="Grafham D.V."/>
            <person name="Gribble S."/>
            <person name="Griffiths C."/>
            <person name="Griffiths-Jones S."/>
            <person name="Grocock R."/>
            <person name="Guy J."/>
            <person name="Hall R.E."/>
            <person name="Hammond S."/>
            <person name="Harley J.L."/>
            <person name="Harrison E.S.I."/>
            <person name="Hart E.A."/>
            <person name="Heath P.D."/>
            <person name="Henderson C.D."/>
            <person name="Hopkins B.L."/>
            <person name="Howard P.J."/>
            <person name="Howden P.J."/>
            <person name="Huckle E."/>
            <person name="Johnson C."/>
            <person name="Johnson D."/>
            <person name="Joy A.A."/>
            <person name="Kay M."/>
            <person name="Keenan S."/>
            <person name="Kershaw J.K."/>
            <person name="Kimberley A.M."/>
            <person name="King A."/>
            <person name="Knights A."/>
            <person name="Laird G.K."/>
            <person name="Langford C."/>
            <person name="Lawlor S."/>
            <person name="Leongamornlert D.A."/>
            <person name="Leversha M."/>
            <person name="Lloyd C."/>
            <person name="Lloyd D.M."/>
            <person name="Lovell J."/>
            <person name="Martin S."/>
            <person name="Mashreghi-Mohammadi M."/>
            <person name="Matthews L."/>
            <person name="McLaren S."/>
            <person name="McLay K.E."/>
            <person name="McMurray A."/>
            <person name="Milne S."/>
            <person name="Nickerson T."/>
            <person name="Nisbett J."/>
            <person name="Nordsiek G."/>
            <person name="Pearce A.V."/>
            <person name="Peck A.I."/>
            <person name="Porter K.M."/>
            <person name="Pandian R."/>
            <person name="Pelan S."/>
            <person name="Phillimore B."/>
            <person name="Povey S."/>
            <person name="Ramsey Y."/>
            <person name="Rand V."/>
            <person name="Scharfe M."/>
            <person name="Sehra H.K."/>
            <person name="Shownkeen R."/>
            <person name="Sims S.K."/>
            <person name="Skuce C.D."/>
            <person name="Smith M."/>
            <person name="Steward C.A."/>
            <person name="Swarbreck D."/>
            <person name="Sycamore N."/>
            <person name="Tester J."/>
            <person name="Thorpe A."/>
            <person name="Tracey A."/>
            <person name="Tromans A."/>
            <person name="Thomas D.W."/>
            <person name="Wall M."/>
            <person name="Wallis J.M."/>
            <person name="West A.P."/>
            <person name="Whitehead S.L."/>
            <person name="Willey D.L."/>
            <person name="Williams S.A."/>
            <person name="Wilming L."/>
            <person name="Wray P.W."/>
            <person name="Young L."/>
            <person name="Ashurst J.L."/>
            <person name="Coulson A."/>
            <person name="Blocker H."/>
            <person name="Durbin R.M."/>
            <person name="Sulston J.E."/>
            <person name="Hubbard T."/>
            <person name="Jackson M.J."/>
            <person name="Bentley D.R."/>
            <person name="Beck S."/>
            <person name="Rogers J."/>
            <person name="Dunham I."/>
        </authorList>
    </citation>
    <scope>NUCLEOTIDE SEQUENCE [LARGE SCALE GENOMIC DNA]</scope>
</reference>
<reference key="5">
    <citation type="submission" date="2005-07" db="EMBL/GenBank/DDBJ databases">
        <authorList>
            <person name="Mural R.J."/>
            <person name="Istrail S."/>
            <person name="Sutton G.G."/>
            <person name="Florea L."/>
            <person name="Halpern A.L."/>
            <person name="Mobarry C.M."/>
            <person name="Lippert R."/>
            <person name="Walenz B."/>
            <person name="Shatkay H."/>
            <person name="Dew I."/>
            <person name="Miller J.R."/>
            <person name="Flanigan M.J."/>
            <person name="Edwards N.J."/>
            <person name="Bolanos R."/>
            <person name="Fasulo D."/>
            <person name="Halldorsson B.V."/>
            <person name="Hannenhalli S."/>
            <person name="Turner R."/>
            <person name="Yooseph S."/>
            <person name="Lu F."/>
            <person name="Nusskern D.R."/>
            <person name="Shue B.C."/>
            <person name="Zheng X.H."/>
            <person name="Zhong F."/>
            <person name="Delcher A.L."/>
            <person name="Huson D.H."/>
            <person name="Kravitz S.A."/>
            <person name="Mouchard L."/>
            <person name="Reinert K."/>
            <person name="Remington K.A."/>
            <person name="Clark A.G."/>
            <person name="Waterman M.S."/>
            <person name="Eichler E.E."/>
            <person name="Adams M.D."/>
            <person name="Hunkapiller M.W."/>
            <person name="Myers E.W."/>
            <person name="Venter J.C."/>
        </authorList>
    </citation>
    <scope>NUCLEOTIDE SEQUENCE [LARGE SCALE GENOMIC DNA]</scope>
</reference>
<reference key="6">
    <citation type="journal article" date="2004" name="Genome Res.">
        <title>The status, quality, and expansion of the NIH full-length cDNA project: the Mammalian Gene Collection (MGC).</title>
        <authorList>
            <consortium name="The MGC Project Team"/>
        </authorList>
    </citation>
    <scope>NUCLEOTIDE SEQUENCE [LARGE SCALE MRNA] (ISOFORM 1)</scope>
    <source>
        <tissue>Brain</tissue>
        <tissue>Kidney</tissue>
        <tissue>Ovary</tissue>
        <tissue>Skin</tissue>
    </source>
</reference>
<reference key="7">
    <citation type="journal article" date="2007" name="J. Biol. Chem.">
        <title>Identification, molecular cloning, and characterization of the sixth subunit of human transcription factor TFIIIC.</title>
        <authorList>
            <person name="Dumay-Odelot H."/>
            <person name="Marck C."/>
            <person name="Durrieu-Gaillard S."/>
            <person name="Lefebvre O."/>
            <person name="Jourdain S."/>
            <person name="Prochazkova M."/>
            <person name="Pflieger A."/>
            <person name="Teichmann M."/>
        </authorList>
    </citation>
    <scope>IDENTIFICATION IN TFIIIC COMPLEX</scope>
    <scope>INTERACTION WITH GTF3C6</scope>
</reference>
<reference key="8">
    <citation type="journal article" date="2009" name="Anal. Chem.">
        <title>Lys-N and trypsin cover complementary parts of the phosphoproteome in a refined SCX-based approach.</title>
        <authorList>
            <person name="Gauci S."/>
            <person name="Helbig A.O."/>
            <person name="Slijper M."/>
            <person name="Krijgsveld J."/>
            <person name="Heck A.J."/>
            <person name="Mohammed S."/>
        </authorList>
    </citation>
    <scope>ACETYLATION [LARGE SCALE ANALYSIS] AT ALA-2</scope>
    <scope>CLEAVAGE OF INITIATOR METHIONINE [LARGE SCALE ANALYSIS]</scope>
    <scope>IDENTIFICATION BY MASS SPECTROMETRY [LARGE SCALE ANALYSIS]</scope>
</reference>
<reference key="9">
    <citation type="journal article" date="2011" name="BMC Syst. Biol.">
        <title>Initial characterization of the human central proteome.</title>
        <authorList>
            <person name="Burkard T.R."/>
            <person name="Planyavsky M."/>
            <person name="Kaupe I."/>
            <person name="Breitwieser F.P."/>
            <person name="Buerckstuemmer T."/>
            <person name="Bennett K.L."/>
            <person name="Superti-Furga G."/>
            <person name="Colinge J."/>
        </authorList>
    </citation>
    <scope>IDENTIFICATION BY MASS SPECTROMETRY [LARGE SCALE ANALYSIS]</scope>
</reference>
<reference key="10">
    <citation type="journal article" date="2012" name="Proc. Natl. Acad. Sci. U.S.A.">
        <title>N-terminal acetylome analyses and functional insights of the N-terminal acetyltransferase NatB.</title>
        <authorList>
            <person name="Van Damme P."/>
            <person name="Lasa M."/>
            <person name="Polevoda B."/>
            <person name="Gazquez C."/>
            <person name="Elosegui-Artola A."/>
            <person name="Kim D.S."/>
            <person name="De Juan-Pardo E."/>
            <person name="Demeyer K."/>
            <person name="Hole K."/>
            <person name="Larrea E."/>
            <person name="Timmerman E."/>
            <person name="Prieto J."/>
            <person name="Arnesen T."/>
            <person name="Sherman F."/>
            <person name="Gevaert K."/>
            <person name="Aldabe R."/>
        </authorList>
    </citation>
    <scope>ACETYLATION [LARGE SCALE ANALYSIS] AT ALA-2</scope>
    <scope>CLEAVAGE OF INITIATOR METHIONINE [LARGE SCALE ANALYSIS]</scope>
    <scope>IDENTIFICATION BY MASS SPECTROMETRY [LARGE SCALE ANALYSIS]</scope>
</reference>
<dbReference type="EMBL" id="AF133124">
    <property type="protein sequence ID" value="AAD41476.1"/>
    <property type="molecule type" value="mRNA"/>
</dbReference>
<dbReference type="EMBL" id="AY007123">
    <property type="protein sequence ID" value="AAG01991.1"/>
    <property type="molecule type" value="mRNA"/>
</dbReference>
<dbReference type="EMBL" id="AK055092">
    <property type="protein sequence ID" value="BAG51466.1"/>
    <property type="molecule type" value="mRNA"/>
</dbReference>
<dbReference type="EMBL" id="AK097295">
    <property type="protein sequence ID" value="BAC04993.1"/>
    <property type="molecule type" value="mRNA"/>
</dbReference>
<dbReference type="EMBL" id="AL162417">
    <property type="status" value="NOT_ANNOTATED_CDS"/>
    <property type="molecule type" value="Genomic_DNA"/>
</dbReference>
<dbReference type="EMBL" id="CH471090">
    <property type="protein sequence ID" value="EAW88026.1"/>
    <property type="molecule type" value="Genomic_DNA"/>
</dbReference>
<dbReference type="EMBL" id="CH471090">
    <property type="protein sequence ID" value="EAW88029.1"/>
    <property type="molecule type" value="Genomic_DNA"/>
</dbReference>
<dbReference type="EMBL" id="BC009741">
    <property type="protein sequence ID" value="AAH09741.2"/>
    <property type="molecule type" value="mRNA"/>
</dbReference>
<dbReference type="EMBL" id="BC011355">
    <property type="protein sequence ID" value="AAH11355.1"/>
    <property type="molecule type" value="mRNA"/>
</dbReference>
<dbReference type="EMBL" id="BC017337">
    <property type="protein sequence ID" value="AAH17337.1"/>
    <property type="molecule type" value="mRNA"/>
</dbReference>
<dbReference type="EMBL" id="BC030157">
    <property type="protein sequence ID" value="AAH30157.2"/>
    <property type="molecule type" value="mRNA"/>
</dbReference>
<dbReference type="CCDS" id="CCDS48050.1">
    <molecule id="Q9Y5Q8-3"/>
</dbReference>
<dbReference type="CCDS" id="CCDS6958.1">
    <molecule id="Q9Y5Q8-1"/>
</dbReference>
<dbReference type="RefSeq" id="NP_001116295.1">
    <molecule id="Q9Y5Q8-3"/>
    <property type="nucleotide sequence ID" value="NM_001122823.2"/>
</dbReference>
<dbReference type="RefSeq" id="NP_001273638.1">
    <property type="nucleotide sequence ID" value="NM_001286709.1"/>
</dbReference>
<dbReference type="RefSeq" id="NP_036219.2">
    <molecule id="Q9Y5Q8-1"/>
    <property type="nucleotide sequence ID" value="NM_012087.4"/>
</dbReference>
<dbReference type="PDB" id="8CLK">
    <property type="method" value="EM"/>
    <property type="resolution" value="3.50 A"/>
    <property type="chains" value="E=1-519"/>
</dbReference>
<dbReference type="PDBsum" id="8CLK"/>
<dbReference type="EMDB" id="EMD-16715"/>
<dbReference type="SMR" id="Q9Y5Q8"/>
<dbReference type="BioGRID" id="114737">
    <property type="interactions" value="191"/>
</dbReference>
<dbReference type="ComplexPortal" id="CPX-2373">
    <property type="entry name" value="General transcription factor TFIIIC complex"/>
</dbReference>
<dbReference type="CORUM" id="Q9Y5Q8"/>
<dbReference type="DIP" id="DIP-50823N"/>
<dbReference type="FunCoup" id="Q9Y5Q8">
    <property type="interactions" value="2086"/>
</dbReference>
<dbReference type="IntAct" id="Q9Y5Q8">
    <property type="interactions" value="118"/>
</dbReference>
<dbReference type="MINT" id="Q9Y5Q8"/>
<dbReference type="STRING" id="9606.ENSP00000361180"/>
<dbReference type="iPTMnet" id="Q9Y5Q8"/>
<dbReference type="PhosphoSitePlus" id="Q9Y5Q8"/>
<dbReference type="BioMuta" id="GTF3C5"/>
<dbReference type="DMDM" id="47606222"/>
<dbReference type="jPOST" id="Q9Y5Q8"/>
<dbReference type="MassIVE" id="Q9Y5Q8"/>
<dbReference type="PaxDb" id="9606-ENSP00000361180"/>
<dbReference type="PeptideAtlas" id="Q9Y5Q8"/>
<dbReference type="ProteomicsDB" id="86475">
    <molecule id="Q9Y5Q8-1"/>
</dbReference>
<dbReference type="ProteomicsDB" id="86476">
    <molecule id="Q9Y5Q8-2"/>
</dbReference>
<dbReference type="ProteomicsDB" id="86477">
    <molecule id="Q9Y5Q8-3"/>
</dbReference>
<dbReference type="Pumba" id="Q9Y5Q8"/>
<dbReference type="Antibodypedia" id="18242">
    <property type="antibodies" value="196 antibodies from 24 providers"/>
</dbReference>
<dbReference type="DNASU" id="9328"/>
<dbReference type="Ensembl" id="ENST00000372097.10">
    <molecule id="Q9Y5Q8-1"/>
    <property type="protein sequence ID" value="ENSP00000361169.5"/>
    <property type="gene ID" value="ENSG00000148308.18"/>
</dbReference>
<dbReference type="Ensembl" id="ENST00000372108.9">
    <molecule id="Q9Y5Q8-3"/>
    <property type="protein sequence ID" value="ENSP00000361180.5"/>
    <property type="gene ID" value="ENSG00000148308.18"/>
</dbReference>
<dbReference type="GeneID" id="9328"/>
<dbReference type="KEGG" id="hsa:9328"/>
<dbReference type="MANE-Select" id="ENST00000372097.10">
    <property type="protein sequence ID" value="ENSP00000361169.5"/>
    <property type="RefSeq nucleotide sequence ID" value="NM_012087.4"/>
    <property type="RefSeq protein sequence ID" value="NP_036219.2"/>
</dbReference>
<dbReference type="UCSC" id="uc004cci.5">
    <molecule id="Q9Y5Q8-1"/>
    <property type="organism name" value="human"/>
</dbReference>
<dbReference type="AGR" id="HGNC:4668"/>
<dbReference type="CTD" id="9328"/>
<dbReference type="DisGeNET" id="9328"/>
<dbReference type="GeneCards" id="GTF3C5"/>
<dbReference type="HGNC" id="HGNC:4668">
    <property type="gene designation" value="GTF3C5"/>
</dbReference>
<dbReference type="HPA" id="ENSG00000148308">
    <property type="expression patterns" value="Low tissue specificity"/>
</dbReference>
<dbReference type="MIM" id="604890">
    <property type="type" value="gene"/>
</dbReference>
<dbReference type="neXtProt" id="NX_Q9Y5Q8"/>
<dbReference type="OpenTargets" id="ENSG00000148308"/>
<dbReference type="PharmGKB" id="PA29056"/>
<dbReference type="VEuPathDB" id="HostDB:ENSG00000148308"/>
<dbReference type="eggNOG" id="KOG2473">
    <property type="taxonomic scope" value="Eukaryota"/>
</dbReference>
<dbReference type="GeneTree" id="ENSGT00390000004458"/>
<dbReference type="HOGENOM" id="CLU_026463_0_0_1"/>
<dbReference type="InParanoid" id="Q9Y5Q8"/>
<dbReference type="OMA" id="PPEYFVR"/>
<dbReference type="OrthoDB" id="5598268at2759"/>
<dbReference type="PAN-GO" id="Q9Y5Q8">
    <property type="GO annotations" value="1 GO annotation based on evolutionary models"/>
</dbReference>
<dbReference type="PhylomeDB" id="Q9Y5Q8"/>
<dbReference type="TreeFam" id="TF313581"/>
<dbReference type="PathwayCommons" id="Q9Y5Q8"/>
<dbReference type="Reactome" id="R-HSA-749476">
    <property type="pathway name" value="RNA Polymerase III Abortive And Retractive Initiation"/>
</dbReference>
<dbReference type="Reactome" id="R-HSA-76061">
    <property type="pathway name" value="RNA Polymerase III Transcription Initiation From Type 1 Promoter"/>
</dbReference>
<dbReference type="Reactome" id="R-HSA-76066">
    <property type="pathway name" value="RNA Polymerase III Transcription Initiation From Type 2 Promoter"/>
</dbReference>
<dbReference type="SignaLink" id="Q9Y5Q8"/>
<dbReference type="SIGNOR" id="Q9Y5Q8"/>
<dbReference type="BioGRID-ORCS" id="9328">
    <property type="hits" value="584 hits in 1171 CRISPR screens"/>
</dbReference>
<dbReference type="ChiTaRS" id="GTF3C5">
    <property type="organism name" value="human"/>
</dbReference>
<dbReference type="GeneWiki" id="GTF3C5"/>
<dbReference type="GenomeRNAi" id="9328"/>
<dbReference type="Pharos" id="Q9Y5Q8">
    <property type="development level" value="Tdark"/>
</dbReference>
<dbReference type="PRO" id="PR:Q9Y5Q8"/>
<dbReference type="Proteomes" id="UP000005640">
    <property type="component" value="Chromosome 9"/>
</dbReference>
<dbReference type="RNAct" id="Q9Y5Q8">
    <property type="molecule type" value="protein"/>
</dbReference>
<dbReference type="Bgee" id="ENSG00000148308">
    <property type="expression patterns" value="Expressed in right hemisphere of cerebellum and 172 other cell types or tissues"/>
</dbReference>
<dbReference type="ExpressionAtlas" id="Q9Y5Q8">
    <property type="expression patterns" value="baseline and differential"/>
</dbReference>
<dbReference type="GO" id="GO:0005654">
    <property type="term" value="C:nucleoplasm"/>
    <property type="evidence" value="ECO:0000314"/>
    <property type="project" value="HPA"/>
</dbReference>
<dbReference type="GO" id="GO:0000127">
    <property type="term" value="C:transcription factor TFIIIC complex"/>
    <property type="evidence" value="ECO:0000314"/>
    <property type="project" value="HGNC-UCL"/>
</dbReference>
<dbReference type="GO" id="GO:0003677">
    <property type="term" value="F:DNA binding"/>
    <property type="evidence" value="ECO:0007669"/>
    <property type="project" value="UniProtKB-KW"/>
</dbReference>
<dbReference type="GO" id="GO:0000995">
    <property type="term" value="F:RNA polymerase III general transcription initiation factor activity"/>
    <property type="evidence" value="ECO:0000314"/>
    <property type="project" value="GO_Central"/>
</dbReference>
<dbReference type="GO" id="GO:0042791">
    <property type="term" value="P:5S class rRNA transcription by RNA polymerase III"/>
    <property type="evidence" value="ECO:0000305"/>
    <property type="project" value="HGNC-UCL"/>
</dbReference>
<dbReference type="GO" id="GO:0035914">
    <property type="term" value="P:skeletal muscle cell differentiation"/>
    <property type="evidence" value="ECO:0007669"/>
    <property type="project" value="Ensembl"/>
</dbReference>
<dbReference type="GO" id="GO:0006383">
    <property type="term" value="P:transcription by RNA polymerase III"/>
    <property type="evidence" value="ECO:0000305"/>
    <property type="project" value="HGNC-UCL"/>
</dbReference>
<dbReference type="GO" id="GO:0006384">
    <property type="term" value="P:transcription initiation at RNA polymerase III promoter"/>
    <property type="evidence" value="ECO:0007669"/>
    <property type="project" value="InterPro"/>
</dbReference>
<dbReference type="GO" id="GO:0042797">
    <property type="term" value="P:tRNA transcription by RNA polymerase III"/>
    <property type="evidence" value="ECO:0000305"/>
    <property type="project" value="HGNC-UCL"/>
</dbReference>
<dbReference type="FunFam" id="3.30.200.160:FF:000001">
    <property type="entry name" value="General transcription factor IIIC subunit 5"/>
    <property type="match status" value="1"/>
</dbReference>
<dbReference type="Gene3D" id="3.30.200.160">
    <property type="entry name" value="TFIIIC, subcomplex tauA, subunit Sfc1, barrel domain"/>
    <property type="match status" value="1"/>
</dbReference>
<dbReference type="InterPro" id="IPR019136">
    <property type="entry name" value="TF_IIIC_su-5_HTH"/>
</dbReference>
<dbReference type="InterPro" id="IPR040454">
    <property type="entry name" value="TF_IIIC_Tfc1/Sfc1"/>
</dbReference>
<dbReference type="InterPro" id="IPR041499">
    <property type="entry name" value="Tfc1/Sfc1_N"/>
</dbReference>
<dbReference type="InterPro" id="IPR042536">
    <property type="entry name" value="TFIIIC_tauA_Sfc1"/>
</dbReference>
<dbReference type="PANTHER" id="PTHR13230:SF5">
    <property type="entry name" value="GENERAL TRANSCRIPTION FACTOR 3C POLYPEPTIDE 5"/>
    <property type="match status" value="1"/>
</dbReference>
<dbReference type="PANTHER" id="PTHR13230">
    <property type="entry name" value="GENERAL TRANSCRIPTION FACTOR IIIC, POLYPEPTIDE 5"/>
    <property type="match status" value="1"/>
</dbReference>
<dbReference type="Pfam" id="PF09734">
    <property type="entry name" value="Tau95"/>
    <property type="match status" value="1"/>
</dbReference>
<dbReference type="Pfam" id="PF17682">
    <property type="entry name" value="Tau95_N"/>
    <property type="match status" value="1"/>
</dbReference>
<comment type="function">
    <text>Involved in RNA polymerase III-mediated transcription. Integral, tightly associated component of the DNA-binding TFIIIC2 subcomplex that directly binds tRNA and virus-associated RNA promoters.</text>
</comment>
<comment type="subunit">
    <text evidence="2 3">Part of the TFIIIC subcomplex TFIIIC2, consisting of six subunits, GTF3C1, GTF3C2, GTF3C3, GTF3C4, GTF3C5 and GTF3C6. Interacts with BRF1, GTF3C6 and TBP.</text>
</comment>
<comment type="interaction">
    <interactant intactId="EBI-1045409">
        <id>Q9Y5Q8</id>
    </interactant>
    <interactant intactId="EBI-6268616">
        <id>Q969F1</id>
        <label>GTF3C6</label>
    </interactant>
    <organismsDiffer>false</organismsDiffer>
    <experiments>2</experiments>
</comment>
<comment type="interaction">
    <interactant intactId="EBI-1045409">
        <id>Q9Y5Q8</id>
    </interactant>
    <interactant intactId="EBI-10171697">
        <id>Q6A162</id>
        <label>KRT40</label>
    </interactant>
    <organismsDiffer>false</organismsDiffer>
    <experiments>3</experiments>
</comment>
<comment type="interaction">
    <interactant intactId="EBI-1045409">
        <id>Q9Y5Q8</id>
    </interactant>
    <interactant intactId="EBI-11953334">
        <id>P60328</id>
        <label>KRTAP12-3</label>
    </interactant>
    <organismsDiffer>false</organismsDiffer>
    <experiments>3</experiments>
</comment>
<comment type="interaction">
    <interactant intactId="EBI-1045409">
        <id>Q9Y5Q8</id>
    </interactant>
    <interactant intactId="EBI-724076">
        <id>Q99750</id>
        <label>MDFI</label>
    </interactant>
    <organismsDiffer>false</organismsDiffer>
    <experiments>3</experiments>
</comment>
<comment type="interaction">
    <interactant intactId="EBI-1045409">
        <id>Q9Y5Q8</id>
    </interactant>
    <interactant intactId="EBI-945833">
        <id>Q7Z3S9</id>
        <label>NOTCH2NLA</label>
    </interactant>
    <organismsDiffer>false</organismsDiffer>
    <experiments>3</experiments>
</comment>
<comment type="subcellular location">
    <subcellularLocation>
        <location>Nucleus</location>
    </subcellularLocation>
</comment>
<comment type="alternative products">
    <event type="alternative splicing"/>
    <isoform>
        <id>Q9Y5Q8-1</id>
        <name>1</name>
        <sequence type="displayed"/>
    </isoform>
    <isoform>
        <id>Q9Y5Q8-2</id>
        <name>2</name>
        <sequence type="described" ref="VSP_010355"/>
    </isoform>
    <isoform>
        <id>Q9Y5Q8-3</id>
        <name>3</name>
        <sequence type="described" ref="VSP_035196"/>
    </isoform>
</comment>
<comment type="similarity">
    <text evidence="5">Belongs to the TFIIIC subunit 5 family.</text>
</comment>
<name>TF3C5_HUMAN</name>
<feature type="initiator methionine" description="Removed" evidence="6 7">
    <location>
        <position position="1"/>
    </location>
</feature>
<feature type="chain" id="PRO_0000209715" description="General transcription factor 3C polypeptide 5">
    <location>
        <begin position="2"/>
        <end position="519"/>
    </location>
</feature>
<feature type="region of interest" description="Disordered" evidence="1">
    <location>
        <begin position="465"/>
        <end position="519"/>
    </location>
</feature>
<feature type="compositionally biased region" description="Acidic residues" evidence="1">
    <location>
        <begin position="484"/>
        <end position="500"/>
    </location>
</feature>
<feature type="compositionally biased region" description="Acidic residues" evidence="1">
    <location>
        <begin position="507"/>
        <end position="519"/>
    </location>
</feature>
<feature type="modified residue" description="N-acetylalanine" evidence="6 7">
    <location>
        <position position="2"/>
    </location>
</feature>
<feature type="splice variant" id="VSP_010355" description="In isoform 2." evidence="4">
    <location>
        <begin position="56"/>
        <end position="65"/>
    </location>
</feature>
<feature type="splice variant" id="VSP_035196" description="In isoform 3." evidence="5">
    <original>K</original>
    <variation>KVSLQTLR</variation>
    <location>
        <position position="389"/>
    </location>
</feature>
<feature type="sequence variant" id="VAR_053727" description="In dbSNP:rs637435.">
    <original>D</original>
    <variation>N</variation>
    <location>
        <position position="445"/>
    </location>
</feature>
<feature type="sequence conflict" description="In Ref. 1; AAD41476." evidence="5" ref="1">
    <original>P</original>
    <variation>R</variation>
    <location>
        <position position="372"/>
    </location>
</feature>
<feature type="sequence conflict" description="In Ref. 3; BAC04993." evidence="5" ref="3">
    <original>T</original>
    <variation>A</variation>
    <location>
        <position position="375"/>
    </location>
</feature>
<organism>
    <name type="scientific">Homo sapiens</name>
    <name type="common">Human</name>
    <dbReference type="NCBI Taxonomy" id="9606"/>
    <lineage>
        <taxon>Eukaryota</taxon>
        <taxon>Metazoa</taxon>
        <taxon>Chordata</taxon>
        <taxon>Craniata</taxon>
        <taxon>Vertebrata</taxon>
        <taxon>Euteleostomi</taxon>
        <taxon>Mammalia</taxon>
        <taxon>Eutheria</taxon>
        <taxon>Euarchontoglires</taxon>
        <taxon>Primates</taxon>
        <taxon>Haplorrhini</taxon>
        <taxon>Catarrhini</taxon>
        <taxon>Hominidae</taxon>
        <taxon>Homo</taxon>
    </lineage>
</organism>
<accession>Q9Y5Q8</accession>
<accession>A6NI44</accession>
<accession>A6NJB9</accession>
<accession>Q5T7U2</accession>
<accession>Q5T7U3</accession>
<accession>Q8N2U7</accession>
<accession>Q8N857</accession>
<accession>Q96GD9</accession>
<accession>Q9H4P2</accession>
<sequence>MAAEAADLGLGAAVPVELRRERRMVCVEYPGVVRDVAKMLPTLGGEEGVSRIYADPTKRLELYFRPKDPYCHPVCANRFSTSSLLLRIRKRTRRQKGVLGTEAHSEVTFDMEILGIISTIYKFQGMSDFQYLAVHTEAGGKHTSMYDKVLMLRPEKEAFFHQELPLYIPPPIFSRLDAPVDYFYRPETQHREGYNNPPISGENLIGLSRARRPHNAIFVNFEDEEVPKQPLEAAAQTWRRVCTNPVDRKVEEELRKLFDIRPIWSRNAVKANISVHPDKLKVLLPFIAYYMITGPWRSLWIRFGYDPRKNPDAKIYQVLDFRIRCGMKHGYAPSDLPVKAKRSTYNYSLPITVKKTSSQLVTMHDLKQGLGPSGTSGARKPASSKYKLKDSVYIFREGALPPYRQMFYQLCDLNVEELQKIIHRNDGAENSCTERDGWCLPKTSDELRDTMSLMIRQTIRSKRPALFSSSAKADGGKEQLTYESGEDEEDEEEEEEEEEDFKPSDGSENEMETEILDYV</sequence>
<protein>
    <recommendedName>
        <fullName>General transcription factor 3C polypeptide 5</fullName>
    </recommendedName>
    <alternativeName>
        <fullName>TF3C-epsilon</fullName>
    </alternativeName>
    <alternativeName>
        <fullName>Transcription factor IIIC 63 kDa subunit</fullName>
        <shortName>TFIIIC 63 kDa subunit</shortName>
        <shortName>TFIIIC63</shortName>
    </alternativeName>
    <alternativeName>
        <fullName>Transcription factor IIIC subunit epsilon</fullName>
    </alternativeName>
</protein>
<keyword id="KW-0002">3D-structure</keyword>
<keyword id="KW-0007">Acetylation</keyword>
<keyword id="KW-0025">Alternative splicing</keyword>
<keyword id="KW-0238">DNA-binding</keyword>
<keyword id="KW-0539">Nucleus</keyword>
<keyword id="KW-1267">Proteomics identification</keyword>
<keyword id="KW-1185">Reference proteome</keyword>
<keyword id="KW-0804">Transcription</keyword>
<proteinExistence type="evidence at protein level"/>
<gene>
    <name type="primary">GTF3C5</name>
    <name type="ORF">CDABP0017</name>
</gene>
<evidence type="ECO:0000256" key="1">
    <source>
        <dbReference type="SAM" id="MobiDB-lite"/>
    </source>
</evidence>
<evidence type="ECO:0000269" key="2">
    <source>
    </source>
</evidence>
<evidence type="ECO:0000269" key="3">
    <source>
    </source>
</evidence>
<evidence type="ECO:0000303" key="4">
    <source>
    </source>
</evidence>
<evidence type="ECO:0000305" key="5"/>
<evidence type="ECO:0007744" key="6">
    <source>
    </source>
</evidence>
<evidence type="ECO:0007744" key="7">
    <source>
    </source>
</evidence>